<name>GUXB_CELFA</name>
<accession>P50899</accession>
<accession>F4H1U3</accession>
<dbReference type="EC" id="3.2.1.91"/>
<dbReference type="EMBL" id="L38827">
    <property type="protein sequence ID" value="AAB00822.1"/>
    <property type="molecule type" value="Genomic_DNA"/>
</dbReference>
<dbReference type="EMBL" id="CP002666">
    <property type="protein sequence ID" value="AEE47513.1"/>
    <property type="molecule type" value="Genomic_DNA"/>
</dbReference>
<dbReference type="PIR" id="S59077">
    <property type="entry name" value="S59077"/>
</dbReference>
<dbReference type="RefSeq" id="WP_013772537.1">
    <property type="nucleotide sequence ID" value="NC_015514.1"/>
</dbReference>
<dbReference type="SMR" id="P50899"/>
<dbReference type="STRING" id="590998.Celf_3400"/>
<dbReference type="CAZy" id="CBM2">
    <property type="family name" value="Carbohydrate-Binding Module Family 2"/>
</dbReference>
<dbReference type="CAZy" id="GH48">
    <property type="family name" value="Glycoside Hydrolase Family 48"/>
</dbReference>
<dbReference type="KEGG" id="cfi:Celf_3400"/>
<dbReference type="eggNOG" id="COG4733">
    <property type="taxonomic scope" value="Bacteria"/>
</dbReference>
<dbReference type="eggNOG" id="COG5297">
    <property type="taxonomic scope" value="Bacteria"/>
</dbReference>
<dbReference type="HOGENOM" id="CLU_009014_0_0_11"/>
<dbReference type="Proteomes" id="UP000008460">
    <property type="component" value="Chromosome"/>
</dbReference>
<dbReference type="GO" id="GO:0008810">
    <property type="term" value="F:cellulase activity"/>
    <property type="evidence" value="ECO:0007669"/>
    <property type="project" value="InterPro"/>
</dbReference>
<dbReference type="GO" id="GO:0016162">
    <property type="term" value="F:cellulose 1,4-beta-cellobiosidase activity"/>
    <property type="evidence" value="ECO:0007669"/>
    <property type="project" value="UniProtKB-EC"/>
</dbReference>
<dbReference type="GO" id="GO:0030247">
    <property type="term" value="F:polysaccharide binding"/>
    <property type="evidence" value="ECO:0007669"/>
    <property type="project" value="InterPro"/>
</dbReference>
<dbReference type="GO" id="GO:0030245">
    <property type="term" value="P:cellulose catabolic process"/>
    <property type="evidence" value="ECO:0007669"/>
    <property type="project" value="UniProtKB-KW"/>
</dbReference>
<dbReference type="CDD" id="cd00063">
    <property type="entry name" value="FN3"/>
    <property type="match status" value="3"/>
</dbReference>
<dbReference type="Gene3D" id="1.50.10.10">
    <property type="match status" value="1"/>
</dbReference>
<dbReference type="Gene3D" id="2.60.40.290">
    <property type="match status" value="1"/>
</dbReference>
<dbReference type="Gene3D" id="2.170.160.10">
    <property type="entry name" value="Endo-1,4-beta-glucanase f. Domain 2"/>
    <property type="match status" value="1"/>
</dbReference>
<dbReference type="Gene3D" id="4.10.870.10">
    <property type="entry name" value="Endo-1,4-beta-glucanase f. Domain 3"/>
    <property type="match status" value="1"/>
</dbReference>
<dbReference type="Gene3D" id="2.60.40.10">
    <property type="entry name" value="Immunoglobulins"/>
    <property type="match status" value="3"/>
</dbReference>
<dbReference type="InterPro" id="IPR008928">
    <property type="entry name" value="6-hairpin_glycosidase_sf"/>
</dbReference>
<dbReference type="InterPro" id="IPR012341">
    <property type="entry name" value="6hp_glycosidase-like_sf"/>
</dbReference>
<dbReference type="InterPro" id="IPR001919">
    <property type="entry name" value="CBD2"/>
</dbReference>
<dbReference type="InterPro" id="IPR008965">
    <property type="entry name" value="CBM2/CBM3_carb-bd_dom_sf"/>
</dbReference>
<dbReference type="InterPro" id="IPR012291">
    <property type="entry name" value="CBM2_carb-bd_dom_sf"/>
</dbReference>
<dbReference type="InterPro" id="IPR018366">
    <property type="entry name" value="CBM2_CS"/>
</dbReference>
<dbReference type="InterPro" id="IPR023309">
    <property type="entry name" value="Endo-1-4-beta-glucanase_dom2"/>
</dbReference>
<dbReference type="InterPro" id="IPR027390">
    <property type="entry name" value="Endoglucanase_F_dom3"/>
</dbReference>
<dbReference type="InterPro" id="IPR003961">
    <property type="entry name" value="FN3_dom"/>
</dbReference>
<dbReference type="InterPro" id="IPR036116">
    <property type="entry name" value="FN3_sf"/>
</dbReference>
<dbReference type="InterPro" id="IPR000556">
    <property type="entry name" value="Glyco_hydro_48F"/>
</dbReference>
<dbReference type="InterPro" id="IPR013783">
    <property type="entry name" value="Ig-like_fold"/>
</dbReference>
<dbReference type="InterPro" id="IPR050964">
    <property type="entry name" value="Striated_Muscle_Regulatory"/>
</dbReference>
<dbReference type="PANTHER" id="PTHR13817:SF73">
    <property type="entry name" value="FIBRONECTIN TYPE-III DOMAIN-CONTAINING PROTEIN"/>
    <property type="match status" value="1"/>
</dbReference>
<dbReference type="PANTHER" id="PTHR13817">
    <property type="entry name" value="TITIN"/>
    <property type="match status" value="1"/>
</dbReference>
<dbReference type="Pfam" id="PF00553">
    <property type="entry name" value="CBM_2"/>
    <property type="match status" value="1"/>
</dbReference>
<dbReference type="Pfam" id="PF00041">
    <property type="entry name" value="fn3"/>
    <property type="match status" value="3"/>
</dbReference>
<dbReference type="Pfam" id="PF02011">
    <property type="entry name" value="Glyco_hydro_48"/>
    <property type="match status" value="1"/>
</dbReference>
<dbReference type="PRINTS" id="PR00844">
    <property type="entry name" value="GLHYDRLASE48"/>
</dbReference>
<dbReference type="SMART" id="SM00637">
    <property type="entry name" value="CBD_II"/>
    <property type="match status" value="1"/>
</dbReference>
<dbReference type="SMART" id="SM00060">
    <property type="entry name" value="FN3"/>
    <property type="match status" value="3"/>
</dbReference>
<dbReference type="SUPFAM" id="SSF49384">
    <property type="entry name" value="Carbohydrate-binding domain"/>
    <property type="match status" value="1"/>
</dbReference>
<dbReference type="SUPFAM" id="SSF49265">
    <property type="entry name" value="Fibronectin type III"/>
    <property type="match status" value="2"/>
</dbReference>
<dbReference type="SUPFAM" id="SSF48208">
    <property type="entry name" value="Six-hairpin glycosidases"/>
    <property type="match status" value="1"/>
</dbReference>
<dbReference type="PROSITE" id="PS51173">
    <property type="entry name" value="CBM2"/>
    <property type="match status" value="1"/>
</dbReference>
<dbReference type="PROSITE" id="PS00561">
    <property type="entry name" value="CBM2_A"/>
    <property type="match status" value="1"/>
</dbReference>
<dbReference type="PROSITE" id="PS50853">
    <property type="entry name" value="FN3"/>
    <property type="match status" value="3"/>
</dbReference>
<feature type="signal peptide" evidence="2">
    <location>
        <begin position="1"/>
        <end position="33"/>
    </location>
</feature>
<feature type="propeptide" id="PRO_0000008028" evidence="6 7">
    <location>
        <begin position="34"/>
        <end position="53"/>
    </location>
</feature>
<feature type="chain" id="PRO_0000008029" description="Exoglucanase B">
    <location>
        <begin position="54"/>
        <end position="1090"/>
    </location>
</feature>
<feature type="domain" description="Fibronectin type-III 1" evidence="3">
    <location>
        <begin position="706"/>
        <end position="791"/>
    </location>
</feature>
<feature type="domain" description="Fibronectin type-III 2" evidence="3">
    <location>
        <begin position="797"/>
        <end position="887"/>
    </location>
</feature>
<feature type="domain" description="Fibronectin type-III 3" evidence="3">
    <location>
        <begin position="897"/>
        <end position="984"/>
    </location>
</feature>
<feature type="domain" description="CBM2" evidence="4">
    <location>
        <begin position="983"/>
        <end position="1090"/>
    </location>
</feature>
<feature type="region of interest" description="Catalytic" evidence="1">
    <location>
        <begin position="54"/>
        <end position="699"/>
    </location>
</feature>
<feature type="region of interest" description="Disordered" evidence="5">
    <location>
        <begin position="1069"/>
        <end position="1090"/>
    </location>
</feature>
<feature type="compositionally biased region" description="Polar residues" evidence="5">
    <location>
        <begin position="1070"/>
        <end position="1090"/>
    </location>
</feature>
<feature type="active site" description="Nucleophile" evidence="1">
    <location>
        <position position="513"/>
    </location>
</feature>
<feature type="disulfide bond" evidence="1">
    <location>
        <begin position="990"/>
        <end position="1089"/>
    </location>
</feature>
<keyword id="KW-0119">Carbohydrate metabolism</keyword>
<keyword id="KW-0136">Cellulose degradation</keyword>
<keyword id="KW-0903">Direct protein sequencing</keyword>
<keyword id="KW-1015">Disulfide bond</keyword>
<keyword id="KW-0326">Glycosidase</keyword>
<keyword id="KW-0378">Hydrolase</keyword>
<keyword id="KW-0624">Polysaccharide degradation</keyword>
<keyword id="KW-1185">Reference proteome</keyword>
<keyword id="KW-0677">Repeat</keyword>
<keyword id="KW-0732">Signal</keyword>
<reference key="1">
    <citation type="journal article" date="1995" name="Biochem. J.">
        <title>Cellobiohydrolase B, a second exo-cellobiohydrolase from the cellulolytic bacterium Cellulomonas fimi.</title>
        <authorList>
            <person name="Shen H."/>
            <person name="Gilkes N.R."/>
            <person name="Kilburn D.G."/>
            <person name="Miller R.C. Jr."/>
            <person name="Warren R.A.J."/>
        </authorList>
    </citation>
    <scope>NUCLEOTIDE SEQUENCE [GENOMIC DNA]</scope>
    <scope>PROTEIN SEQUENCE OF 456-461</scope>
    <source>
        <strain>ATCC 484 / DSM 20113 / JCM 1341 / CCUG 24087 / LMG 16345 / NBRC 15513 / NCIMB 8980 / NCTC 7547 / NRS-133</strain>
    </source>
</reference>
<reference key="2">
    <citation type="submission" date="2011-04" db="EMBL/GenBank/DDBJ databases">
        <title>Complete sequence of Cellulomonas fimi ATCC 484.</title>
        <authorList>
            <consortium name="US DOE Joint Genome Institute"/>
            <person name="Lucas S."/>
            <person name="Han J."/>
            <person name="Lapidus A."/>
            <person name="Cheng J.-F."/>
            <person name="Goodwin L."/>
            <person name="Pitluck S."/>
            <person name="Peters L."/>
            <person name="Chertkov O."/>
            <person name="Detter J.C."/>
            <person name="Han C."/>
            <person name="Tapia R."/>
            <person name="Land M."/>
            <person name="Hauser L."/>
            <person name="Kyrpides N."/>
            <person name="Ivanova N."/>
            <person name="Ovchinnikova G."/>
            <person name="Pagani I."/>
            <person name="Mead D."/>
            <person name="Brumm P."/>
            <person name="Woyke T."/>
        </authorList>
    </citation>
    <scope>NUCLEOTIDE SEQUENCE [LARGE SCALE GENOMIC DNA]</scope>
    <source>
        <strain>ATCC 484 / DSM 20113 / JCM 1341 / CCUG 24087 / LMG 16345 / NBRC 15513 / NCIMB 8980 / NCTC 7547 / NRS-133</strain>
    </source>
</reference>
<reference key="3">
    <citation type="journal article" date="1993" name="J. Bacteriol.">
        <title>Cellulose-binding polypeptides from Cellulomonas fimi: endoglucanase D (CenD), a family A beta-1,4-glucanase.</title>
        <authorList>
            <person name="Meinke A."/>
            <person name="Gilkes N.R."/>
            <person name="Kilburn D.G."/>
            <person name="Miller R.C. Jr."/>
            <person name="Warren R.A.J."/>
        </authorList>
    </citation>
    <scope>PROTEIN SEQUENCE OF 54-75</scope>
    <source>
        <strain>ATCC 484 / DSM 20113 / JCM 1341 / CCUG 24087 / LMG 16345 / NBRC 15513 / NCIMB 8980 / NCTC 7547 / NRS-133</strain>
    </source>
</reference>
<reference key="4">
    <citation type="journal article" date="1994" name="Biochem. Biophys. Res. Commun.">
        <title>Stereochemical course of hydrolysis catalysed by Cellulomonas fimi CenE, a member of a new family of beta-1,4-glucanases.</title>
        <authorList>
            <person name="Shen H."/>
            <person name="Tomme P."/>
            <person name="Meinke A."/>
            <person name="Gilkes N.R."/>
            <person name="Kilburn D.G."/>
            <person name="Warren R.A.J."/>
            <person name="Miller R.C. Jr."/>
        </authorList>
    </citation>
    <scope>PROTEIN SEQUENCE OF 54-78</scope>
</reference>
<gene>
    <name type="primary">cbhB</name>
    <name type="synonym">cenE</name>
    <name type="ordered locus">Celf_3400</name>
</gene>
<evidence type="ECO:0000250" key="1"/>
<evidence type="ECO:0000255" key="2"/>
<evidence type="ECO:0000255" key="3">
    <source>
        <dbReference type="PROSITE-ProRule" id="PRU00316"/>
    </source>
</evidence>
<evidence type="ECO:0000255" key="4">
    <source>
        <dbReference type="PROSITE-ProRule" id="PRU01135"/>
    </source>
</evidence>
<evidence type="ECO:0000256" key="5">
    <source>
        <dbReference type="SAM" id="MobiDB-lite"/>
    </source>
</evidence>
<evidence type="ECO:0000269" key="6">
    <source>
    </source>
</evidence>
<evidence type="ECO:0000269" key="7">
    <source>
    </source>
</evidence>
<evidence type="ECO:0000305" key="8"/>
<comment type="function">
    <text>Hydrolyzes cellohexaose to a mixture of cellotetraose, cellotriose and cellobiose, with only a trace of glucose. It hydrolyzed cellopentaose to cellotriose and cellobiose, and cellotetraose to cellobiose, but it did not hydrolyze cellotriose. Also has weak endoglucanase activity. Hydrolyzes glucosidic bonds with inversion of anomeric configuration.</text>
</comment>
<comment type="catalytic activity">
    <reaction>
        <text>Hydrolysis of (1-&gt;4)-beta-D-glucosidic linkages in cellulose and cellotetraose, releasing cellobiose from the non-reducing ends of the chains.</text>
        <dbReference type="EC" id="3.2.1.91"/>
    </reaction>
</comment>
<comment type="similarity">
    <text evidence="8">Belongs to the glycosyl hydrolase 48 (cellulase L) family.</text>
</comment>
<proteinExistence type="evidence at protein level"/>
<sequence>MSSTTRRRSAWVAAATVGVSSFLAVAGITPAIAAAGAGQPATVTVPAASPVRAAVDGEYAQRFLAQYDKIKDPANGYFSAQGIPYHAVETLMVEAPDYGHETTSEAYSYWLWLEALYGQVTQDWAPLNHAWDTMEKYMIPQSVDQPTNSFYNPNSPATYAPEFNHPSSYPSQLNSGISGGTDPIGAELKATYGNADVYQMHWLADVDNIYGFGATPGAGCTLGPTATGTSFINTFQRGPQESVWETVPQPSCEEFKYGGKNGYLDLFTKDASYAKQWKYTSASDADARAVEAVYWANQWATEQGKAADVAATVAKAAKMGDYLRYTLFDKYFKKIGCTSPTCAAGQGREAAHYLLSWYMAWGGATDTSSGWAWRIGSSHAHFGYQNPLAAWALSTDPKLTPKSPTAKADWAASMQRQLEFYTWLQASNGGIAGGATNSWDGAYAQPPAGTPTFYGMGYTEAPVYVDPPSNRWFGMQAWGVQRVAELYYASGNAQAKKILDKWVPWVVANISTDGASWKVPSELKWTGKPDTWNAAAPTGNPGLTVEVTSYGQDVGVAADTARALLFYAAKSGDTASRDKAKALLDAIWANNQDPLGVSAVETRGDYKRFDDTYVANGDGIYIPSGWTGTMPNGDVIKPGVSFLDIRSFYKKDPNWSKVQTFLDGGAEPQFRYHRFWAQTAVAGALADYARLFDDGTTTPDTTAPTVPTGLQAGVVTSTEATISWTASTDDTRVTGYDVYRGATKVGTATTTSFTDTGLTASTAYAYTVRAFDAAGNVSAPSAALTVTTKATPSDTTAPSVPAITSSSSTANSVTIGWSASTDNAGGSGLAGYDVYRGATRVAQTTALTFTDTGLTASTAYEYTVRARDVAGNVSAPSTAVSVTTKSDTTPDTTAPSVPAGLAAMTVTETSVALTWNASTDTGGSGLKGYDVYRGATRVGSTTTASYTDTGLTAATAYQYTVRATDNAGNVSAASAALSVTTKTPQTGGSCSVAYNASSWNSGFTASVRITNTGTTTINGWSLGFDLTAGQKVQQGWSATWTQSGSTVTATNAPWNGTLAPGQTVDVGFNGSHTGQNPNPASFTLNGASCT</sequence>
<protein>
    <recommendedName>
        <fullName>Exoglucanase B</fullName>
        <ecNumber>3.2.1.91</ecNumber>
    </recommendedName>
    <alternativeName>
        <fullName>1,4-beta-cellobiohydrolase B</fullName>
    </alternativeName>
    <alternativeName>
        <fullName>CBP120</fullName>
    </alternativeName>
    <alternativeName>
        <fullName>Exocellobiohydrolase B</fullName>
    </alternativeName>
</protein>
<organism>
    <name type="scientific">Cellulomonas fimi (strain ATCC 484 / DSM 20113 / JCM 1341 / CCUG 24087 / LMG 16345 / NBRC 15513 / NCIMB 8980 / NCTC 7547 / NRS-133)</name>
    <dbReference type="NCBI Taxonomy" id="590998"/>
    <lineage>
        <taxon>Bacteria</taxon>
        <taxon>Bacillati</taxon>
        <taxon>Actinomycetota</taxon>
        <taxon>Actinomycetes</taxon>
        <taxon>Micrococcales</taxon>
        <taxon>Cellulomonadaceae</taxon>
        <taxon>Cellulomonas</taxon>
    </lineage>
</organism>